<protein>
    <recommendedName>
        <fullName evidence="1">Protein Smg</fullName>
    </recommendedName>
</protein>
<accession>Q1R648</accession>
<comment type="similarity">
    <text evidence="1">Belongs to the Smg family.</text>
</comment>
<reference key="1">
    <citation type="journal article" date="2006" name="Proc. Natl. Acad. Sci. U.S.A.">
        <title>Identification of genes subject to positive selection in uropathogenic strains of Escherichia coli: a comparative genomics approach.</title>
        <authorList>
            <person name="Chen S.L."/>
            <person name="Hung C.-S."/>
            <person name="Xu J."/>
            <person name="Reigstad C.S."/>
            <person name="Magrini V."/>
            <person name="Sabo A."/>
            <person name="Blasiar D."/>
            <person name="Bieri T."/>
            <person name="Meyer R.R."/>
            <person name="Ozersky P."/>
            <person name="Armstrong J.R."/>
            <person name="Fulton R.S."/>
            <person name="Latreille J.P."/>
            <person name="Spieth J."/>
            <person name="Hooton T.M."/>
            <person name="Mardis E.R."/>
            <person name="Hultgren S.J."/>
            <person name="Gordon J.I."/>
        </authorList>
    </citation>
    <scope>NUCLEOTIDE SEQUENCE [LARGE SCALE GENOMIC DNA]</scope>
    <source>
        <strain>UTI89 / UPEC</strain>
    </source>
</reference>
<gene>
    <name evidence="1" type="primary">smg</name>
    <name type="ordered locus">UTI89_C3729</name>
</gene>
<sequence length="157" mass="18483">MFDVLMYLFETYIHTEAELRVDQDKLEQDLTDAGFDREDIYNALLWLEKLADYQEGLAEPMQLASDPLSMRIYTPEECERLDASCRGFLLFLEQIQVLNLETREMVIERVLALDTAEFDLEDLKWVILMVLFNIPGCENAYQQMEELLFEVNEGMLH</sequence>
<organism>
    <name type="scientific">Escherichia coli (strain UTI89 / UPEC)</name>
    <dbReference type="NCBI Taxonomy" id="364106"/>
    <lineage>
        <taxon>Bacteria</taxon>
        <taxon>Pseudomonadati</taxon>
        <taxon>Pseudomonadota</taxon>
        <taxon>Gammaproteobacteria</taxon>
        <taxon>Enterobacterales</taxon>
        <taxon>Enterobacteriaceae</taxon>
        <taxon>Escherichia</taxon>
    </lineage>
</organism>
<proteinExistence type="inferred from homology"/>
<name>SMG_ECOUT</name>
<feature type="chain" id="PRO_1000025650" description="Protein Smg">
    <location>
        <begin position="1"/>
        <end position="157"/>
    </location>
</feature>
<evidence type="ECO:0000255" key="1">
    <source>
        <dbReference type="HAMAP-Rule" id="MF_00598"/>
    </source>
</evidence>
<dbReference type="EMBL" id="CP000243">
    <property type="protein sequence ID" value="ABE09166.1"/>
    <property type="molecule type" value="Genomic_DNA"/>
</dbReference>
<dbReference type="RefSeq" id="WP_000460672.1">
    <property type="nucleotide sequence ID" value="NZ_CP064825.1"/>
</dbReference>
<dbReference type="SMR" id="Q1R648"/>
<dbReference type="GeneID" id="86948148"/>
<dbReference type="KEGG" id="eci:UTI89_C3729"/>
<dbReference type="HOGENOM" id="CLU_133242_0_0_6"/>
<dbReference type="Proteomes" id="UP000001952">
    <property type="component" value="Chromosome"/>
</dbReference>
<dbReference type="HAMAP" id="MF_00598">
    <property type="entry name" value="Smg"/>
    <property type="match status" value="1"/>
</dbReference>
<dbReference type="InterPro" id="IPR007456">
    <property type="entry name" value="Smg"/>
</dbReference>
<dbReference type="NCBIfam" id="NF002897">
    <property type="entry name" value="PRK03430.1"/>
    <property type="match status" value="1"/>
</dbReference>
<dbReference type="PANTHER" id="PTHR38692">
    <property type="entry name" value="PROTEIN SMG"/>
    <property type="match status" value="1"/>
</dbReference>
<dbReference type="PANTHER" id="PTHR38692:SF1">
    <property type="entry name" value="PROTEIN SMG"/>
    <property type="match status" value="1"/>
</dbReference>
<dbReference type="Pfam" id="PF04361">
    <property type="entry name" value="DUF494"/>
    <property type="match status" value="1"/>
</dbReference>